<gene>
    <name evidence="1" type="primary">cmk</name>
    <name type="ordered locus">PSPA7_1966</name>
</gene>
<proteinExistence type="inferred from homology"/>
<feature type="chain" id="PRO_1000048249" description="Cytidylate kinase">
    <location>
        <begin position="1"/>
        <end position="229"/>
    </location>
</feature>
<feature type="binding site" evidence="1">
    <location>
        <begin position="12"/>
        <end position="20"/>
    </location>
    <ligand>
        <name>ATP</name>
        <dbReference type="ChEBI" id="CHEBI:30616"/>
    </ligand>
</feature>
<evidence type="ECO:0000255" key="1">
    <source>
        <dbReference type="HAMAP-Rule" id="MF_00238"/>
    </source>
</evidence>
<protein>
    <recommendedName>
        <fullName evidence="1">Cytidylate kinase</fullName>
        <shortName evidence="1">CK</shortName>
        <ecNumber evidence="1">2.7.4.25</ecNumber>
    </recommendedName>
    <alternativeName>
        <fullName evidence="1">Cytidine monophosphate kinase</fullName>
        <shortName evidence="1">CMP kinase</shortName>
    </alternativeName>
</protein>
<organism>
    <name type="scientific">Pseudomonas paraeruginosa (strain DSM 24068 / PA7)</name>
    <name type="common">Pseudomonas aeruginosa (strain PA7)</name>
    <dbReference type="NCBI Taxonomy" id="381754"/>
    <lineage>
        <taxon>Bacteria</taxon>
        <taxon>Pseudomonadati</taxon>
        <taxon>Pseudomonadota</taxon>
        <taxon>Gammaproteobacteria</taxon>
        <taxon>Pseudomonadales</taxon>
        <taxon>Pseudomonadaceae</taxon>
        <taxon>Pseudomonas</taxon>
        <taxon>Pseudomonas paraeruginosa</taxon>
    </lineage>
</organism>
<comment type="catalytic activity">
    <reaction evidence="1">
        <text>CMP + ATP = CDP + ADP</text>
        <dbReference type="Rhea" id="RHEA:11600"/>
        <dbReference type="ChEBI" id="CHEBI:30616"/>
        <dbReference type="ChEBI" id="CHEBI:58069"/>
        <dbReference type="ChEBI" id="CHEBI:60377"/>
        <dbReference type="ChEBI" id="CHEBI:456216"/>
        <dbReference type="EC" id="2.7.4.25"/>
    </reaction>
</comment>
<comment type="catalytic activity">
    <reaction evidence="1">
        <text>dCMP + ATP = dCDP + ADP</text>
        <dbReference type="Rhea" id="RHEA:25094"/>
        <dbReference type="ChEBI" id="CHEBI:30616"/>
        <dbReference type="ChEBI" id="CHEBI:57566"/>
        <dbReference type="ChEBI" id="CHEBI:58593"/>
        <dbReference type="ChEBI" id="CHEBI:456216"/>
        <dbReference type="EC" id="2.7.4.25"/>
    </reaction>
</comment>
<comment type="subcellular location">
    <subcellularLocation>
        <location evidence="1">Cytoplasm</location>
    </subcellularLocation>
</comment>
<comment type="similarity">
    <text evidence="1">Belongs to the cytidylate kinase family. Type 1 subfamily.</text>
</comment>
<keyword id="KW-0067">ATP-binding</keyword>
<keyword id="KW-0963">Cytoplasm</keyword>
<keyword id="KW-0418">Kinase</keyword>
<keyword id="KW-0547">Nucleotide-binding</keyword>
<keyword id="KW-0808">Transferase</keyword>
<reference key="1">
    <citation type="submission" date="2007-06" db="EMBL/GenBank/DDBJ databases">
        <authorList>
            <person name="Dodson R.J."/>
            <person name="Harkins D."/>
            <person name="Paulsen I.T."/>
        </authorList>
    </citation>
    <scope>NUCLEOTIDE SEQUENCE [LARGE SCALE GENOMIC DNA]</scope>
    <source>
        <strain>DSM 24068 / PA7</strain>
    </source>
</reference>
<dbReference type="EC" id="2.7.4.25" evidence="1"/>
<dbReference type="EMBL" id="CP000744">
    <property type="protein sequence ID" value="ABR83715.1"/>
    <property type="molecule type" value="Genomic_DNA"/>
</dbReference>
<dbReference type="RefSeq" id="WP_012075023.1">
    <property type="nucleotide sequence ID" value="NC_009656.1"/>
</dbReference>
<dbReference type="SMR" id="A6V2R2"/>
<dbReference type="GeneID" id="77220318"/>
<dbReference type="KEGG" id="pap:PSPA7_1966"/>
<dbReference type="HOGENOM" id="CLU_079959_0_2_6"/>
<dbReference type="Proteomes" id="UP000001582">
    <property type="component" value="Chromosome"/>
</dbReference>
<dbReference type="GO" id="GO:0005829">
    <property type="term" value="C:cytosol"/>
    <property type="evidence" value="ECO:0007669"/>
    <property type="project" value="TreeGrafter"/>
</dbReference>
<dbReference type="GO" id="GO:0005524">
    <property type="term" value="F:ATP binding"/>
    <property type="evidence" value="ECO:0007669"/>
    <property type="project" value="UniProtKB-UniRule"/>
</dbReference>
<dbReference type="GO" id="GO:0036430">
    <property type="term" value="F:CMP kinase activity"/>
    <property type="evidence" value="ECO:0007669"/>
    <property type="project" value="RHEA"/>
</dbReference>
<dbReference type="GO" id="GO:0036431">
    <property type="term" value="F:dCMP kinase activity"/>
    <property type="evidence" value="ECO:0007669"/>
    <property type="project" value="RHEA"/>
</dbReference>
<dbReference type="GO" id="GO:0015949">
    <property type="term" value="P:nucleobase-containing small molecule interconversion"/>
    <property type="evidence" value="ECO:0007669"/>
    <property type="project" value="TreeGrafter"/>
</dbReference>
<dbReference type="GO" id="GO:0006220">
    <property type="term" value="P:pyrimidine nucleotide metabolic process"/>
    <property type="evidence" value="ECO:0007669"/>
    <property type="project" value="UniProtKB-UniRule"/>
</dbReference>
<dbReference type="CDD" id="cd02020">
    <property type="entry name" value="CMPK"/>
    <property type="match status" value="1"/>
</dbReference>
<dbReference type="FunFam" id="3.40.50.300:FF:000262">
    <property type="entry name" value="Cytidylate kinase"/>
    <property type="match status" value="1"/>
</dbReference>
<dbReference type="Gene3D" id="3.40.50.300">
    <property type="entry name" value="P-loop containing nucleotide triphosphate hydrolases"/>
    <property type="match status" value="1"/>
</dbReference>
<dbReference type="HAMAP" id="MF_00238">
    <property type="entry name" value="Cytidyl_kinase_type1"/>
    <property type="match status" value="1"/>
</dbReference>
<dbReference type="InterPro" id="IPR003136">
    <property type="entry name" value="Cytidylate_kin"/>
</dbReference>
<dbReference type="InterPro" id="IPR011994">
    <property type="entry name" value="Cytidylate_kinase_dom"/>
</dbReference>
<dbReference type="InterPro" id="IPR027417">
    <property type="entry name" value="P-loop_NTPase"/>
</dbReference>
<dbReference type="NCBIfam" id="TIGR00017">
    <property type="entry name" value="cmk"/>
    <property type="match status" value="1"/>
</dbReference>
<dbReference type="PANTHER" id="PTHR21299:SF2">
    <property type="entry name" value="CYTIDYLATE KINASE"/>
    <property type="match status" value="1"/>
</dbReference>
<dbReference type="PANTHER" id="PTHR21299">
    <property type="entry name" value="CYTIDYLATE KINASE/PANTOATE-BETA-ALANINE LIGASE"/>
    <property type="match status" value="1"/>
</dbReference>
<dbReference type="Pfam" id="PF02224">
    <property type="entry name" value="Cytidylate_kin"/>
    <property type="match status" value="1"/>
</dbReference>
<dbReference type="SUPFAM" id="SSF52540">
    <property type="entry name" value="P-loop containing nucleoside triphosphate hydrolases"/>
    <property type="match status" value="1"/>
</dbReference>
<accession>A6V2R2</accession>
<sequence>MNAAVPMLAIDGPSGAGKGTVAGLLARRLGWNLLDSGALYRLLAFAAVNHGVDLTNEEALKLLAAHLDVQFVAADDSHGQRIILEGEEVTDVIRTEQVGAGASQVAALPAVRDALLQRQRAFREAPGLVADGRDMGTVVFPDAPLKIFLTASAEERARRRYLQLKAKGADVDQSALLEEIRERDERDSQRAVAPLKPADDAILLDSTEMSIEAVVETIIHHCEQQGWDV</sequence>
<name>KCY_PSEP7</name>